<reference key="1">
    <citation type="journal article" date="2006" name="J. Bacteriol.">
        <title>Complete genome sequence of the dehalorespiring bacterium Desulfitobacterium hafniense Y51 and comparison with Dehalococcoides ethenogenes 195.</title>
        <authorList>
            <person name="Nonaka H."/>
            <person name="Keresztes G."/>
            <person name="Shinoda Y."/>
            <person name="Ikenaga Y."/>
            <person name="Abe M."/>
            <person name="Naito K."/>
            <person name="Inatomi K."/>
            <person name="Furukawa K."/>
            <person name="Inui M."/>
            <person name="Yukawa H."/>
        </authorList>
    </citation>
    <scope>NUCLEOTIDE SEQUENCE [LARGE SCALE GENOMIC DNA]</scope>
    <source>
        <strain>Y51</strain>
    </source>
</reference>
<name>GLME_DESHY</name>
<keyword id="KW-0846">Cobalamin</keyword>
<keyword id="KW-0170">Cobalt</keyword>
<keyword id="KW-0413">Isomerase</keyword>
<keyword id="KW-1185">Reference proteome</keyword>
<accession>Q24SG9</accession>
<sequence length="484" mass="53409">MDLTNRMMEPEEFARQRQEVLNQWATGRDVDFEEAVAYHKNLPRSKNFSYKLAEGKARGITFAQPRAGVALLNEHLELLRFLEEEGEADFLPTTIDSYTRQNRYAEAQTGIDESRLVGRSMLNGFPAVNHGVSACRRLIEHPKVPVQVRHGTPDARLLAEITLAGGFTAYEGGGISYNIPYAKDVSIEKSIKYWQYVDRLVGMYEEKGVSINREPFGPLTGTLVPPSVSHGVAVIEGILAVAQGVRSLTLGYGQCGNLLQDVAAIRTLPLLAAEYLSKLGYTDFDITTVFHQWMGGFPQDEAKAYGVISWGAAAAALGKATKVIVKSPHEALGIPTKEANAAGIRTTKQILNMLKDQSLPMTEELALEEKMIREETRAILDRTLDLGEGDMAVGAVRAFQAGVIDVPFAPSRYNGGRILPARDSQGAVRVLDFGNLPFSEEIKEFHRERIARRGRDEGREPSFQMVIDDIYAIGKGMLVGRPRS</sequence>
<comment type="function">
    <text evidence="1">Catalyzes the carbon skeleton rearrangement of L-glutamate to L-threo-3-methylaspartate ((2S,3S)-3-methylaspartate).</text>
</comment>
<comment type="catalytic activity">
    <reaction evidence="1">
        <text>(2S,3S)-3-methyl-L-aspartate = L-glutamate</text>
        <dbReference type="Rhea" id="RHEA:12857"/>
        <dbReference type="ChEBI" id="CHEBI:29985"/>
        <dbReference type="ChEBI" id="CHEBI:58724"/>
        <dbReference type="EC" id="5.4.99.1"/>
    </reaction>
</comment>
<comment type="cofactor">
    <cofactor evidence="1">
        <name>adenosylcob(III)alamin</name>
        <dbReference type="ChEBI" id="CHEBI:18408"/>
    </cofactor>
</comment>
<comment type="pathway">
    <text evidence="1">Amino-acid degradation; L-glutamate degradation via mesaconate pathway; acetate and pyruvate from L-glutamate: step 1/4.</text>
</comment>
<comment type="subunit">
    <text evidence="1">Heterotetramer composed of 2 epsilon subunits (GlmE) and 2 sigma subunits (GlmS). GlmE exists as a homodimer and GlmS as a monomer.</text>
</comment>
<comment type="similarity">
    <text evidence="1">Belongs to the methylaspartate mutase GlmE subunit family.</text>
</comment>
<proteinExistence type="inferred from homology"/>
<protein>
    <recommendedName>
        <fullName evidence="1">Glutamate mutase epsilon subunit</fullName>
        <ecNumber evidence="1">5.4.99.1</ecNumber>
    </recommendedName>
    <alternativeName>
        <fullName evidence="1">Glutamate mutase E chain</fullName>
    </alternativeName>
    <alternativeName>
        <fullName evidence="1">Glutamate mutase large subunit</fullName>
    </alternativeName>
    <alternativeName>
        <fullName evidence="1">Methylaspartate mutase</fullName>
    </alternativeName>
</protein>
<organism>
    <name type="scientific">Desulfitobacterium hafniense (strain Y51)</name>
    <dbReference type="NCBI Taxonomy" id="138119"/>
    <lineage>
        <taxon>Bacteria</taxon>
        <taxon>Bacillati</taxon>
        <taxon>Bacillota</taxon>
        <taxon>Clostridia</taxon>
        <taxon>Eubacteriales</taxon>
        <taxon>Desulfitobacteriaceae</taxon>
        <taxon>Desulfitobacterium</taxon>
    </lineage>
</organism>
<dbReference type="EC" id="5.4.99.1" evidence="1"/>
<dbReference type="EMBL" id="AP008230">
    <property type="protein sequence ID" value="BAE85023.1"/>
    <property type="molecule type" value="Genomic_DNA"/>
</dbReference>
<dbReference type="RefSeq" id="WP_011460941.1">
    <property type="nucleotide sequence ID" value="NC_007907.1"/>
</dbReference>
<dbReference type="SMR" id="Q24SG9"/>
<dbReference type="STRING" id="138119.DSY3234"/>
<dbReference type="KEGG" id="dsy:DSY3234"/>
<dbReference type="eggNOG" id="COG4865">
    <property type="taxonomic scope" value="Bacteria"/>
</dbReference>
<dbReference type="HOGENOM" id="CLU_029922_0_0_9"/>
<dbReference type="UniPathway" id="UPA00561">
    <property type="reaction ID" value="UER00617"/>
</dbReference>
<dbReference type="Proteomes" id="UP000001946">
    <property type="component" value="Chromosome"/>
</dbReference>
<dbReference type="GO" id="GO:0031419">
    <property type="term" value="F:cobalamin binding"/>
    <property type="evidence" value="ECO:0007669"/>
    <property type="project" value="UniProtKB-KW"/>
</dbReference>
<dbReference type="GO" id="GO:0050097">
    <property type="term" value="F:methylaspartate mutase activity"/>
    <property type="evidence" value="ECO:0007669"/>
    <property type="project" value="UniProtKB-UniRule"/>
</dbReference>
<dbReference type="GO" id="GO:0019670">
    <property type="term" value="P:anaerobic glutamate catabolic process"/>
    <property type="evidence" value="ECO:0007669"/>
    <property type="project" value="InterPro"/>
</dbReference>
<dbReference type="GO" id="GO:0019553">
    <property type="term" value="P:glutamate catabolic process via L-citramalate"/>
    <property type="evidence" value="ECO:0007669"/>
    <property type="project" value="UniProtKB-UniRule"/>
</dbReference>
<dbReference type="CDD" id="cd00245">
    <property type="entry name" value="Glm_e"/>
    <property type="match status" value="1"/>
</dbReference>
<dbReference type="Gene3D" id="3.90.970.10">
    <property type="match status" value="1"/>
</dbReference>
<dbReference type="Gene3D" id="3.20.20.240">
    <property type="entry name" value="Methylmalonyl-CoA mutase"/>
    <property type="match status" value="1"/>
</dbReference>
<dbReference type="HAMAP" id="MF_01923">
    <property type="entry name" value="Me_Asp_mutase_E"/>
    <property type="match status" value="1"/>
</dbReference>
<dbReference type="InterPro" id="IPR016176">
    <property type="entry name" value="Cbl-dep_enz_cat"/>
</dbReference>
<dbReference type="InterPro" id="IPR006396">
    <property type="entry name" value="Glu_mut_E"/>
</dbReference>
<dbReference type="InterPro" id="IPR014714">
    <property type="entry name" value="Glu_mut_E_C_dom_sf"/>
</dbReference>
<dbReference type="NCBIfam" id="TIGR01503">
    <property type="entry name" value="MthylAspMut_E"/>
    <property type="match status" value="1"/>
</dbReference>
<dbReference type="Pfam" id="PF06368">
    <property type="entry name" value="Met_asp_mut_E"/>
    <property type="match status" value="1"/>
</dbReference>
<dbReference type="PIRSF" id="PIRSF001495">
    <property type="entry name" value="Met_asp_mut_epsi"/>
    <property type="match status" value="1"/>
</dbReference>
<dbReference type="SUPFAM" id="SSF51703">
    <property type="entry name" value="Cobalamin (vitamin B12)-dependent enzymes"/>
    <property type="match status" value="1"/>
</dbReference>
<gene>
    <name evidence="1" type="primary">glmE</name>
    <name type="ordered locus">DSY3234</name>
</gene>
<feature type="chain" id="PRO_0000429442" description="Glutamate mutase epsilon subunit">
    <location>
        <begin position="1"/>
        <end position="484"/>
    </location>
</feature>
<feature type="binding site" evidence="1">
    <location>
        <position position="66"/>
    </location>
    <ligand>
        <name>L-glutamate</name>
        <dbReference type="ChEBI" id="CHEBI:29985"/>
    </ligand>
</feature>
<feature type="binding site" evidence="1">
    <location>
        <position position="68"/>
    </location>
    <ligand>
        <name>adenosylcob(III)alamin</name>
        <dbReference type="ChEBI" id="CHEBI:18408"/>
    </ligand>
</feature>
<feature type="binding site" evidence="1">
    <location>
        <position position="100"/>
    </location>
    <ligand>
        <name>L-glutamate</name>
        <dbReference type="ChEBI" id="CHEBI:29985"/>
    </ligand>
</feature>
<feature type="binding site" evidence="1">
    <location>
        <position position="123"/>
    </location>
    <ligand>
        <name>adenosylcob(III)alamin</name>
        <dbReference type="ChEBI" id="CHEBI:18408"/>
    </ligand>
</feature>
<feature type="binding site" evidence="1">
    <location>
        <begin position="149"/>
        <end position="150"/>
    </location>
    <ligand>
        <name>L-glutamate</name>
        <dbReference type="ChEBI" id="CHEBI:29985"/>
    </ligand>
</feature>
<feature type="binding site" evidence="1">
    <location>
        <position position="171"/>
    </location>
    <ligand>
        <name>L-glutamate</name>
        <dbReference type="ChEBI" id="CHEBI:29985"/>
    </ligand>
</feature>
<feature type="binding site" evidence="1">
    <location>
        <position position="177"/>
    </location>
    <ligand>
        <name>L-glutamate</name>
        <dbReference type="ChEBI" id="CHEBI:29985"/>
    </ligand>
</feature>
<feature type="binding site" evidence="1">
    <location>
        <position position="180"/>
    </location>
    <ligand>
        <name>adenosylcob(III)alamin</name>
        <dbReference type="ChEBI" id="CHEBI:18408"/>
    </ligand>
</feature>
<feature type="binding site" evidence="1">
    <location>
        <position position="181"/>
    </location>
    <ligand>
        <name>L-glutamate</name>
        <dbReference type="ChEBI" id="CHEBI:29985"/>
    </ligand>
</feature>
<feature type="binding site" evidence="1">
    <location>
        <position position="297"/>
    </location>
    <ligand>
        <name>adenosylcob(III)alamin</name>
        <dbReference type="ChEBI" id="CHEBI:18408"/>
    </ligand>
</feature>
<feature type="binding site" evidence="1">
    <location>
        <position position="326"/>
    </location>
    <ligand>
        <name>adenosylcob(III)alamin</name>
        <dbReference type="ChEBI" id="CHEBI:18408"/>
    </ligand>
</feature>
<feature type="binding site" evidence="1">
    <location>
        <position position="330"/>
    </location>
    <ligand>
        <name>adenosylcob(III)alamin</name>
        <dbReference type="ChEBI" id="CHEBI:18408"/>
    </ligand>
</feature>
<feature type="binding site" evidence="1">
    <location>
        <position position="334"/>
    </location>
    <ligand>
        <name>adenosylcob(III)alamin</name>
        <dbReference type="ChEBI" id="CHEBI:18408"/>
    </ligand>
</feature>
<evidence type="ECO:0000255" key="1">
    <source>
        <dbReference type="HAMAP-Rule" id="MF_01923"/>
    </source>
</evidence>